<gene>
    <name type="ordered locus">SACOL0426</name>
</gene>
<keyword id="KW-0012">Acyltransferase</keyword>
<keyword id="KW-0963">Cytoplasm</keyword>
<keyword id="KW-0808">Transferase</keyword>
<reference key="1">
    <citation type="journal article" date="2005" name="J. Bacteriol.">
        <title>Insights on evolution of virulence and resistance from the complete genome analysis of an early methicillin-resistant Staphylococcus aureus strain and a biofilm-producing methicillin-resistant Staphylococcus epidermidis strain.</title>
        <authorList>
            <person name="Gill S.R."/>
            <person name="Fouts D.E."/>
            <person name="Archer G.L."/>
            <person name="Mongodin E.F."/>
            <person name="DeBoy R.T."/>
            <person name="Ravel J."/>
            <person name="Paulsen I.T."/>
            <person name="Kolonay J.F."/>
            <person name="Brinkac L.M."/>
            <person name="Beanan M.J."/>
            <person name="Dodson R.J."/>
            <person name="Daugherty S.C."/>
            <person name="Madupu R."/>
            <person name="Angiuoli S.V."/>
            <person name="Durkin A.S."/>
            <person name="Haft D.H."/>
            <person name="Vamathevan J.J."/>
            <person name="Khouri H."/>
            <person name="Utterback T.R."/>
            <person name="Lee C."/>
            <person name="Dimitrov G."/>
            <person name="Jiang L."/>
            <person name="Qin H."/>
            <person name="Weidman J."/>
            <person name="Tran K."/>
            <person name="Kang K.H."/>
            <person name="Hance I.R."/>
            <person name="Nelson K.E."/>
            <person name="Fraser C.M."/>
        </authorList>
    </citation>
    <scope>NUCLEOTIDE SEQUENCE [LARGE SCALE GENOMIC DNA]</scope>
    <source>
        <strain>COL</strain>
    </source>
</reference>
<organism>
    <name type="scientific">Staphylococcus aureus (strain COL)</name>
    <dbReference type="NCBI Taxonomy" id="93062"/>
    <lineage>
        <taxon>Bacteria</taxon>
        <taxon>Bacillati</taxon>
        <taxon>Bacillota</taxon>
        <taxon>Bacilli</taxon>
        <taxon>Bacillales</taxon>
        <taxon>Staphylococcaceae</taxon>
        <taxon>Staphylococcus</taxon>
    </lineage>
</organism>
<comment type="catalytic activity">
    <reaction evidence="2">
        <text>2 acetyl-CoA = acetoacetyl-CoA + CoA</text>
        <dbReference type="Rhea" id="RHEA:21036"/>
        <dbReference type="ChEBI" id="CHEBI:57286"/>
        <dbReference type="ChEBI" id="CHEBI:57287"/>
        <dbReference type="ChEBI" id="CHEBI:57288"/>
        <dbReference type="EC" id="2.3.1.9"/>
    </reaction>
</comment>
<comment type="subcellular location">
    <subcellularLocation>
        <location evidence="1">Cytoplasm</location>
    </subcellularLocation>
</comment>
<comment type="similarity">
    <text evidence="3">Belongs to the thiolase-like superfamily. Thiolase family.</text>
</comment>
<protein>
    <recommendedName>
        <fullName>Probable acetyl-CoA acyltransferase</fullName>
        <ecNumber>2.3.1.9</ecNumber>
    </recommendedName>
    <alternativeName>
        <fullName>Acetoacetyl-CoA thiolase</fullName>
    </alternativeName>
</protein>
<proteinExistence type="inferred from homology"/>
<feature type="chain" id="PRO_0000270503" description="Probable acetyl-CoA acyltransferase">
    <location>
        <begin position="1"/>
        <end position="393"/>
    </location>
</feature>
<feature type="active site" description="Acyl-thioester intermediate" evidence="1">
    <location>
        <position position="88"/>
    </location>
</feature>
<feature type="active site" description="Proton acceptor" evidence="2">
    <location>
        <position position="349"/>
    </location>
</feature>
<feature type="active site" description="Proton acceptor" evidence="2">
    <location>
        <position position="378"/>
    </location>
</feature>
<name>THLA_STAAC</name>
<accession>Q5HIU0</accession>
<evidence type="ECO:0000250" key="1"/>
<evidence type="ECO:0000255" key="2">
    <source>
        <dbReference type="PROSITE-ProRule" id="PRU10020"/>
    </source>
</evidence>
<evidence type="ECO:0000305" key="3"/>
<dbReference type="EC" id="2.3.1.9"/>
<dbReference type="EMBL" id="CP000046">
    <property type="protein sequence ID" value="AAW38894.1"/>
    <property type="molecule type" value="Genomic_DNA"/>
</dbReference>
<dbReference type="RefSeq" id="WP_000199065.1">
    <property type="nucleotide sequence ID" value="NC_002951.2"/>
</dbReference>
<dbReference type="SMR" id="Q5HIU0"/>
<dbReference type="KEGG" id="sac:SACOL0426"/>
<dbReference type="HOGENOM" id="CLU_031026_0_0_9"/>
<dbReference type="Proteomes" id="UP000000530">
    <property type="component" value="Chromosome"/>
</dbReference>
<dbReference type="GO" id="GO:0005737">
    <property type="term" value="C:cytoplasm"/>
    <property type="evidence" value="ECO:0007669"/>
    <property type="project" value="UniProtKB-SubCell"/>
</dbReference>
<dbReference type="GO" id="GO:0003985">
    <property type="term" value="F:acetyl-CoA C-acetyltransferase activity"/>
    <property type="evidence" value="ECO:0007669"/>
    <property type="project" value="UniProtKB-EC"/>
</dbReference>
<dbReference type="CDD" id="cd00751">
    <property type="entry name" value="thiolase"/>
    <property type="match status" value="1"/>
</dbReference>
<dbReference type="FunFam" id="3.40.47.10:FF:000010">
    <property type="entry name" value="Acetyl-CoA acetyltransferase (Thiolase)"/>
    <property type="match status" value="1"/>
</dbReference>
<dbReference type="Gene3D" id="3.40.47.10">
    <property type="match status" value="2"/>
</dbReference>
<dbReference type="InterPro" id="IPR002155">
    <property type="entry name" value="Thiolase"/>
</dbReference>
<dbReference type="InterPro" id="IPR016039">
    <property type="entry name" value="Thiolase-like"/>
</dbReference>
<dbReference type="InterPro" id="IPR020615">
    <property type="entry name" value="Thiolase_acyl_enz_int_AS"/>
</dbReference>
<dbReference type="InterPro" id="IPR020610">
    <property type="entry name" value="Thiolase_AS"/>
</dbReference>
<dbReference type="InterPro" id="IPR020617">
    <property type="entry name" value="Thiolase_C"/>
</dbReference>
<dbReference type="InterPro" id="IPR020613">
    <property type="entry name" value="Thiolase_CS"/>
</dbReference>
<dbReference type="InterPro" id="IPR020616">
    <property type="entry name" value="Thiolase_N"/>
</dbReference>
<dbReference type="NCBIfam" id="TIGR01930">
    <property type="entry name" value="AcCoA-C-Actrans"/>
    <property type="match status" value="1"/>
</dbReference>
<dbReference type="PANTHER" id="PTHR18919:SF107">
    <property type="entry name" value="ACETYL-COA ACETYLTRANSFERASE, CYTOSOLIC"/>
    <property type="match status" value="1"/>
</dbReference>
<dbReference type="PANTHER" id="PTHR18919">
    <property type="entry name" value="ACETYL-COA C-ACYLTRANSFERASE"/>
    <property type="match status" value="1"/>
</dbReference>
<dbReference type="Pfam" id="PF02803">
    <property type="entry name" value="Thiolase_C"/>
    <property type="match status" value="1"/>
</dbReference>
<dbReference type="Pfam" id="PF00108">
    <property type="entry name" value="Thiolase_N"/>
    <property type="match status" value="1"/>
</dbReference>
<dbReference type="PIRSF" id="PIRSF000429">
    <property type="entry name" value="Ac-CoA_Ac_transf"/>
    <property type="match status" value="1"/>
</dbReference>
<dbReference type="SUPFAM" id="SSF53901">
    <property type="entry name" value="Thiolase-like"/>
    <property type="match status" value="2"/>
</dbReference>
<dbReference type="PROSITE" id="PS00098">
    <property type="entry name" value="THIOLASE_1"/>
    <property type="match status" value="1"/>
</dbReference>
<dbReference type="PROSITE" id="PS00737">
    <property type="entry name" value="THIOLASE_2"/>
    <property type="match status" value="1"/>
</dbReference>
<dbReference type="PROSITE" id="PS00099">
    <property type="entry name" value="THIOLASE_3"/>
    <property type="match status" value="1"/>
</dbReference>
<sequence>MTRVVLAAAYRTPIGVFGGAFKDVPAYDLGATLIEHIIKETGLNPSEIDEVIIGNVLQAGQGQNPARIAAMKGGLPETVPAFTVNKVCGSGLKSIQLAYQSIVTGENDIVLAGGMENMSQSPMLVNNSRFGFKMGHQSMVDSMVYDGLTDVFNQYHMGITAENLAEQYGISREEQDTFAVNSQQKAVRAQQNGEFDSEIVPVSIPQRKGEPIVVTKDEGVRENVSVEKLSRLRPAFKKDGTVTAGNASGINDGAAMMLVMSEDKAKELNIEPLAVLDGFGSHGVDPSIMGIAPVGAVEKALKRSKKELSDIDVFELNEAFAAQSLAVDRELKLPPEKVNVKGGAIALGHPIGASGARVLVTLLHQLNDEVETGLTSLCIGGGQAIAAVVSKYK</sequence>